<name>TRMD_SYNS3</name>
<proteinExistence type="inferred from homology"/>
<evidence type="ECO:0000255" key="1">
    <source>
        <dbReference type="HAMAP-Rule" id="MF_00605"/>
    </source>
</evidence>
<evidence type="ECO:0000256" key="2">
    <source>
        <dbReference type="SAM" id="MobiDB-lite"/>
    </source>
</evidence>
<gene>
    <name evidence="1" type="primary">trmD</name>
    <name type="ordered locus">sync_0775</name>
</gene>
<reference key="1">
    <citation type="journal article" date="2006" name="Proc. Natl. Acad. Sci. U.S.A.">
        <title>Genome sequence of Synechococcus CC9311: insights into adaptation to a coastal environment.</title>
        <authorList>
            <person name="Palenik B."/>
            <person name="Ren Q."/>
            <person name="Dupont C.L."/>
            <person name="Myers G.S."/>
            <person name="Heidelberg J.F."/>
            <person name="Badger J.H."/>
            <person name="Madupu R."/>
            <person name="Nelson W.C."/>
            <person name="Brinkac L.M."/>
            <person name="Dodson R.J."/>
            <person name="Durkin A.S."/>
            <person name="Daugherty S.C."/>
            <person name="Sullivan S.A."/>
            <person name="Khouri H."/>
            <person name="Mohamoud Y."/>
            <person name="Halpin R."/>
            <person name="Paulsen I.T."/>
        </authorList>
    </citation>
    <scope>NUCLEOTIDE SEQUENCE [LARGE SCALE GENOMIC DNA]</scope>
    <source>
        <strain>CC9311</strain>
    </source>
</reference>
<keyword id="KW-0963">Cytoplasm</keyword>
<keyword id="KW-0489">Methyltransferase</keyword>
<keyword id="KW-1185">Reference proteome</keyword>
<keyword id="KW-0949">S-adenosyl-L-methionine</keyword>
<keyword id="KW-0808">Transferase</keyword>
<keyword id="KW-0819">tRNA processing</keyword>
<accession>Q0IC33</accession>
<organism>
    <name type="scientific">Synechococcus sp. (strain CC9311)</name>
    <dbReference type="NCBI Taxonomy" id="64471"/>
    <lineage>
        <taxon>Bacteria</taxon>
        <taxon>Bacillati</taxon>
        <taxon>Cyanobacteriota</taxon>
        <taxon>Cyanophyceae</taxon>
        <taxon>Synechococcales</taxon>
        <taxon>Synechococcaceae</taxon>
        <taxon>Synechococcus</taxon>
    </lineage>
</organism>
<protein>
    <recommendedName>
        <fullName evidence="1">tRNA (guanine-N(1)-)-methyltransferase</fullName>
        <ecNumber evidence="1">2.1.1.228</ecNumber>
    </recommendedName>
    <alternativeName>
        <fullName evidence="1">M1G-methyltransferase</fullName>
    </alternativeName>
    <alternativeName>
        <fullName evidence="1">tRNA [GM37] methyltransferase</fullName>
    </alternativeName>
</protein>
<sequence>MAPYRLDVISLAPQAFAPLPEVGVIGRAFGAKIAELHLHNPRDHAIDRHRKVDDVPYGGGAGMVLKPEPVFAAFESVPVCSRRRVLLMSPQGQPLRQVDLQRWSQDYDQLVFLCGHYEGFDERIRSLADEEVSMGDFVLTGGELPAMTIINGVVRLLPGTVGTPESLVEESHSDLLLEHSHYTRPADFRGMTVPDVLRSGDHGAVALWRQQQREQRTQERRPDLWNRWQQIQNPTPPAP</sequence>
<dbReference type="EC" id="2.1.1.228" evidence="1"/>
<dbReference type="EMBL" id="CP000435">
    <property type="protein sequence ID" value="ABI46634.1"/>
    <property type="molecule type" value="Genomic_DNA"/>
</dbReference>
<dbReference type="RefSeq" id="WP_011618716.1">
    <property type="nucleotide sequence ID" value="NC_008319.1"/>
</dbReference>
<dbReference type="SMR" id="Q0IC33"/>
<dbReference type="STRING" id="64471.sync_0775"/>
<dbReference type="KEGG" id="syg:sync_0775"/>
<dbReference type="eggNOG" id="COG0336">
    <property type="taxonomic scope" value="Bacteria"/>
</dbReference>
<dbReference type="HOGENOM" id="CLU_047363_0_1_3"/>
<dbReference type="OrthoDB" id="9807416at2"/>
<dbReference type="Proteomes" id="UP000001961">
    <property type="component" value="Chromosome"/>
</dbReference>
<dbReference type="GO" id="GO:0005829">
    <property type="term" value="C:cytosol"/>
    <property type="evidence" value="ECO:0007669"/>
    <property type="project" value="TreeGrafter"/>
</dbReference>
<dbReference type="GO" id="GO:0052906">
    <property type="term" value="F:tRNA (guanine(37)-N1)-methyltransferase activity"/>
    <property type="evidence" value="ECO:0007669"/>
    <property type="project" value="UniProtKB-UniRule"/>
</dbReference>
<dbReference type="GO" id="GO:0002939">
    <property type="term" value="P:tRNA N1-guanine methylation"/>
    <property type="evidence" value="ECO:0007669"/>
    <property type="project" value="TreeGrafter"/>
</dbReference>
<dbReference type="CDD" id="cd18080">
    <property type="entry name" value="TrmD-like"/>
    <property type="match status" value="1"/>
</dbReference>
<dbReference type="Gene3D" id="3.40.1280.10">
    <property type="match status" value="1"/>
</dbReference>
<dbReference type="Gene3D" id="1.10.1270.20">
    <property type="entry name" value="tRNA(m1g37)methyltransferase, domain 2"/>
    <property type="match status" value="1"/>
</dbReference>
<dbReference type="HAMAP" id="MF_00605">
    <property type="entry name" value="TrmD"/>
    <property type="match status" value="1"/>
</dbReference>
<dbReference type="InterPro" id="IPR029028">
    <property type="entry name" value="Alpha/beta_knot_MTases"/>
</dbReference>
<dbReference type="InterPro" id="IPR023148">
    <property type="entry name" value="tRNA_m1G_MeTrfase_C_sf"/>
</dbReference>
<dbReference type="InterPro" id="IPR002649">
    <property type="entry name" value="tRNA_m1G_MeTrfase_TrmD"/>
</dbReference>
<dbReference type="InterPro" id="IPR029026">
    <property type="entry name" value="tRNA_m1G_MTases_N"/>
</dbReference>
<dbReference type="InterPro" id="IPR016009">
    <property type="entry name" value="tRNA_MeTrfase_TRMD/TRM10"/>
</dbReference>
<dbReference type="NCBIfam" id="NF000648">
    <property type="entry name" value="PRK00026.1"/>
    <property type="match status" value="1"/>
</dbReference>
<dbReference type="NCBIfam" id="TIGR00088">
    <property type="entry name" value="trmD"/>
    <property type="match status" value="1"/>
</dbReference>
<dbReference type="PANTHER" id="PTHR46417">
    <property type="entry name" value="TRNA (GUANINE-N(1)-)-METHYLTRANSFERASE"/>
    <property type="match status" value="1"/>
</dbReference>
<dbReference type="PANTHER" id="PTHR46417:SF1">
    <property type="entry name" value="TRNA (GUANINE-N(1)-)-METHYLTRANSFERASE"/>
    <property type="match status" value="1"/>
</dbReference>
<dbReference type="Pfam" id="PF01746">
    <property type="entry name" value="tRNA_m1G_MT"/>
    <property type="match status" value="1"/>
</dbReference>
<dbReference type="PIRSF" id="PIRSF000386">
    <property type="entry name" value="tRNA_mtase"/>
    <property type="match status" value="1"/>
</dbReference>
<dbReference type="SUPFAM" id="SSF75217">
    <property type="entry name" value="alpha/beta knot"/>
    <property type="match status" value="1"/>
</dbReference>
<feature type="chain" id="PRO_1000006535" description="tRNA (guanine-N(1)-)-methyltransferase">
    <location>
        <begin position="1"/>
        <end position="239"/>
    </location>
</feature>
<feature type="region of interest" description="Disordered" evidence="2">
    <location>
        <begin position="210"/>
        <end position="239"/>
    </location>
</feature>
<feature type="compositionally biased region" description="Basic and acidic residues" evidence="2">
    <location>
        <begin position="211"/>
        <end position="224"/>
    </location>
</feature>
<feature type="binding site" evidence="1">
    <location>
        <position position="115"/>
    </location>
    <ligand>
        <name>S-adenosyl-L-methionine</name>
        <dbReference type="ChEBI" id="CHEBI:59789"/>
    </ligand>
</feature>
<feature type="binding site" evidence="1">
    <location>
        <begin position="134"/>
        <end position="139"/>
    </location>
    <ligand>
        <name>S-adenosyl-L-methionine</name>
        <dbReference type="ChEBI" id="CHEBI:59789"/>
    </ligand>
</feature>
<comment type="function">
    <text evidence="1">Specifically methylates guanosine-37 in various tRNAs.</text>
</comment>
<comment type="catalytic activity">
    <reaction evidence="1">
        <text>guanosine(37) in tRNA + S-adenosyl-L-methionine = N(1)-methylguanosine(37) in tRNA + S-adenosyl-L-homocysteine + H(+)</text>
        <dbReference type="Rhea" id="RHEA:36899"/>
        <dbReference type="Rhea" id="RHEA-COMP:10145"/>
        <dbReference type="Rhea" id="RHEA-COMP:10147"/>
        <dbReference type="ChEBI" id="CHEBI:15378"/>
        <dbReference type="ChEBI" id="CHEBI:57856"/>
        <dbReference type="ChEBI" id="CHEBI:59789"/>
        <dbReference type="ChEBI" id="CHEBI:73542"/>
        <dbReference type="ChEBI" id="CHEBI:74269"/>
        <dbReference type="EC" id="2.1.1.228"/>
    </reaction>
</comment>
<comment type="subunit">
    <text evidence="1">Homodimer.</text>
</comment>
<comment type="subcellular location">
    <subcellularLocation>
        <location evidence="1">Cytoplasm</location>
    </subcellularLocation>
</comment>
<comment type="similarity">
    <text evidence="1">Belongs to the RNA methyltransferase TrmD family.</text>
</comment>